<reference key="1">
    <citation type="journal article" date="2000" name="Science">
        <title>The genome sequence of Drosophila melanogaster.</title>
        <authorList>
            <person name="Adams M.D."/>
            <person name="Celniker S.E."/>
            <person name="Holt R.A."/>
            <person name="Evans C.A."/>
            <person name="Gocayne J.D."/>
            <person name="Amanatides P.G."/>
            <person name="Scherer S.E."/>
            <person name="Li P.W."/>
            <person name="Hoskins R.A."/>
            <person name="Galle R.F."/>
            <person name="George R.A."/>
            <person name="Lewis S.E."/>
            <person name="Richards S."/>
            <person name="Ashburner M."/>
            <person name="Henderson S.N."/>
            <person name="Sutton G.G."/>
            <person name="Wortman J.R."/>
            <person name="Yandell M.D."/>
            <person name="Zhang Q."/>
            <person name="Chen L.X."/>
            <person name="Brandon R.C."/>
            <person name="Rogers Y.-H.C."/>
            <person name="Blazej R.G."/>
            <person name="Champe M."/>
            <person name="Pfeiffer B.D."/>
            <person name="Wan K.H."/>
            <person name="Doyle C."/>
            <person name="Baxter E.G."/>
            <person name="Helt G."/>
            <person name="Nelson C.R."/>
            <person name="Miklos G.L.G."/>
            <person name="Abril J.F."/>
            <person name="Agbayani A."/>
            <person name="An H.-J."/>
            <person name="Andrews-Pfannkoch C."/>
            <person name="Baldwin D."/>
            <person name="Ballew R.M."/>
            <person name="Basu A."/>
            <person name="Baxendale J."/>
            <person name="Bayraktaroglu L."/>
            <person name="Beasley E.M."/>
            <person name="Beeson K.Y."/>
            <person name="Benos P.V."/>
            <person name="Berman B.P."/>
            <person name="Bhandari D."/>
            <person name="Bolshakov S."/>
            <person name="Borkova D."/>
            <person name="Botchan M.R."/>
            <person name="Bouck J."/>
            <person name="Brokstein P."/>
            <person name="Brottier P."/>
            <person name="Burtis K.C."/>
            <person name="Busam D.A."/>
            <person name="Butler H."/>
            <person name="Cadieu E."/>
            <person name="Center A."/>
            <person name="Chandra I."/>
            <person name="Cherry J.M."/>
            <person name="Cawley S."/>
            <person name="Dahlke C."/>
            <person name="Davenport L.B."/>
            <person name="Davies P."/>
            <person name="de Pablos B."/>
            <person name="Delcher A."/>
            <person name="Deng Z."/>
            <person name="Mays A.D."/>
            <person name="Dew I."/>
            <person name="Dietz S.M."/>
            <person name="Dodson K."/>
            <person name="Doup L.E."/>
            <person name="Downes M."/>
            <person name="Dugan-Rocha S."/>
            <person name="Dunkov B.C."/>
            <person name="Dunn P."/>
            <person name="Durbin K.J."/>
            <person name="Evangelista C.C."/>
            <person name="Ferraz C."/>
            <person name="Ferriera S."/>
            <person name="Fleischmann W."/>
            <person name="Fosler C."/>
            <person name="Gabrielian A.E."/>
            <person name="Garg N.S."/>
            <person name="Gelbart W.M."/>
            <person name="Glasser K."/>
            <person name="Glodek A."/>
            <person name="Gong F."/>
            <person name="Gorrell J.H."/>
            <person name="Gu Z."/>
            <person name="Guan P."/>
            <person name="Harris M."/>
            <person name="Harris N.L."/>
            <person name="Harvey D.A."/>
            <person name="Heiman T.J."/>
            <person name="Hernandez J.R."/>
            <person name="Houck J."/>
            <person name="Hostin D."/>
            <person name="Houston K.A."/>
            <person name="Howland T.J."/>
            <person name="Wei M.-H."/>
            <person name="Ibegwam C."/>
            <person name="Jalali M."/>
            <person name="Kalush F."/>
            <person name="Karpen G.H."/>
            <person name="Ke Z."/>
            <person name="Kennison J.A."/>
            <person name="Ketchum K.A."/>
            <person name="Kimmel B.E."/>
            <person name="Kodira C.D."/>
            <person name="Kraft C.L."/>
            <person name="Kravitz S."/>
            <person name="Kulp D."/>
            <person name="Lai Z."/>
            <person name="Lasko P."/>
            <person name="Lei Y."/>
            <person name="Levitsky A.A."/>
            <person name="Li J.H."/>
            <person name="Li Z."/>
            <person name="Liang Y."/>
            <person name="Lin X."/>
            <person name="Liu X."/>
            <person name="Mattei B."/>
            <person name="McIntosh T.C."/>
            <person name="McLeod M.P."/>
            <person name="McPherson D."/>
            <person name="Merkulov G."/>
            <person name="Milshina N.V."/>
            <person name="Mobarry C."/>
            <person name="Morris J."/>
            <person name="Moshrefi A."/>
            <person name="Mount S.M."/>
            <person name="Moy M."/>
            <person name="Murphy B."/>
            <person name="Murphy L."/>
            <person name="Muzny D.M."/>
            <person name="Nelson D.L."/>
            <person name="Nelson D.R."/>
            <person name="Nelson K.A."/>
            <person name="Nixon K."/>
            <person name="Nusskern D.R."/>
            <person name="Pacleb J.M."/>
            <person name="Palazzolo M."/>
            <person name="Pittman G.S."/>
            <person name="Pan S."/>
            <person name="Pollard J."/>
            <person name="Puri V."/>
            <person name="Reese M.G."/>
            <person name="Reinert K."/>
            <person name="Remington K."/>
            <person name="Saunders R.D.C."/>
            <person name="Scheeler F."/>
            <person name="Shen H."/>
            <person name="Shue B.C."/>
            <person name="Siden-Kiamos I."/>
            <person name="Simpson M."/>
            <person name="Skupski M.P."/>
            <person name="Smith T.J."/>
            <person name="Spier E."/>
            <person name="Spradling A.C."/>
            <person name="Stapleton M."/>
            <person name="Strong R."/>
            <person name="Sun E."/>
            <person name="Svirskas R."/>
            <person name="Tector C."/>
            <person name="Turner R."/>
            <person name="Venter E."/>
            <person name="Wang A.H."/>
            <person name="Wang X."/>
            <person name="Wang Z.-Y."/>
            <person name="Wassarman D.A."/>
            <person name="Weinstock G.M."/>
            <person name="Weissenbach J."/>
            <person name="Williams S.M."/>
            <person name="Woodage T."/>
            <person name="Worley K.C."/>
            <person name="Wu D."/>
            <person name="Yang S."/>
            <person name="Yao Q.A."/>
            <person name="Ye J."/>
            <person name="Yeh R.-F."/>
            <person name="Zaveri J.S."/>
            <person name="Zhan M."/>
            <person name="Zhang G."/>
            <person name="Zhao Q."/>
            <person name="Zheng L."/>
            <person name="Zheng X.H."/>
            <person name="Zhong F.N."/>
            <person name="Zhong W."/>
            <person name="Zhou X."/>
            <person name="Zhu S.C."/>
            <person name="Zhu X."/>
            <person name="Smith H.O."/>
            <person name="Gibbs R.A."/>
            <person name="Myers E.W."/>
            <person name="Rubin G.M."/>
            <person name="Venter J.C."/>
        </authorList>
    </citation>
    <scope>NUCLEOTIDE SEQUENCE [LARGE SCALE GENOMIC DNA]</scope>
    <source>
        <strain>Berkeley</strain>
    </source>
</reference>
<reference key="2">
    <citation type="journal article" date="2002" name="Genome Biol.">
        <title>Annotation of the Drosophila melanogaster euchromatic genome: a systematic review.</title>
        <authorList>
            <person name="Misra S."/>
            <person name="Crosby M.A."/>
            <person name="Mungall C.J."/>
            <person name="Matthews B.B."/>
            <person name="Campbell K.S."/>
            <person name="Hradecky P."/>
            <person name="Huang Y."/>
            <person name="Kaminker J.S."/>
            <person name="Millburn G.H."/>
            <person name="Prochnik S.E."/>
            <person name="Smith C.D."/>
            <person name="Tupy J.L."/>
            <person name="Whitfield E.J."/>
            <person name="Bayraktaroglu L."/>
            <person name="Berman B.P."/>
            <person name="Bettencourt B.R."/>
            <person name="Celniker S.E."/>
            <person name="de Grey A.D.N.J."/>
            <person name="Drysdale R.A."/>
            <person name="Harris N.L."/>
            <person name="Richter J."/>
            <person name="Russo S."/>
            <person name="Schroeder A.J."/>
            <person name="Shu S.Q."/>
            <person name="Stapleton M."/>
            <person name="Yamada C."/>
            <person name="Ashburner M."/>
            <person name="Gelbart W.M."/>
            <person name="Rubin G.M."/>
            <person name="Lewis S.E."/>
        </authorList>
    </citation>
    <scope>GENOME REANNOTATION</scope>
    <source>
        <strain>Berkeley</strain>
    </source>
</reference>
<reference key="3">
    <citation type="journal article" date="2002" name="Genome Biol.">
        <title>A Drosophila full-length cDNA resource.</title>
        <authorList>
            <person name="Stapleton M."/>
            <person name="Carlson J.W."/>
            <person name="Brokstein P."/>
            <person name="Yu C."/>
            <person name="Champe M."/>
            <person name="George R.A."/>
            <person name="Guarin H."/>
            <person name="Kronmiller B."/>
            <person name="Pacleb J.M."/>
            <person name="Park S."/>
            <person name="Wan K.H."/>
            <person name="Rubin G.M."/>
            <person name="Celniker S.E."/>
        </authorList>
    </citation>
    <scope>NUCLEOTIDE SEQUENCE [LARGE SCALE MRNA]</scope>
    <source>
        <strain>Berkeley</strain>
        <tissue>Embryo</tissue>
    </source>
</reference>
<sequence length="394" mass="45999">MIKIKRKTAPPPVEQDSDSDSSFDEEEPQDLEVQEGPVTDSSDEEAASSSKKTAKQGEASEDLKEEDDDDDEEENDDDDEEEDDDDDDDKKTRIPVLNPLSWMRNKEQRLALYKKMKKEKHKKKMQERRARRKAGVPANPGHTIESLREKDQTEVANLNDSDNEELQKELQLDDFSSYFERSYEPKVLITFADNPVTKTRKFGLELSRIFPNALVKIRNKSSVKKICKSAEREEFTDVVIVNEDRRKPNGLLVIHLPNGPTAHFKLSNVKLTSDIKRDHKEITKHRPEVILNNFTTRLGLTVGRMLGALFHHDPEFRGRRAVTFHNQRDYIFFRHHRYEFTKEGKRVKLRELGPRFTLKLRSLQEGTFDSKTGDYAWIISNKRHAMESRRRFFL</sequence>
<feature type="chain" id="PRO_0000120254" description="Probable ribosome production factor 1">
    <location>
        <begin position="1"/>
        <end position="394"/>
    </location>
</feature>
<feature type="domain" description="Brix" evidence="2">
    <location>
        <begin position="185"/>
        <end position="369"/>
    </location>
</feature>
<feature type="region of interest" description="Disordered" evidence="3">
    <location>
        <begin position="1"/>
        <end position="98"/>
    </location>
</feature>
<feature type="region of interest" description="Disordered" evidence="3">
    <location>
        <begin position="116"/>
        <end position="152"/>
    </location>
</feature>
<feature type="region of interest" description="RNA-binding" evidence="1">
    <location>
        <begin position="347"/>
        <end position="364"/>
    </location>
</feature>
<feature type="compositionally biased region" description="Acidic residues" evidence="3">
    <location>
        <begin position="15"/>
        <end position="33"/>
    </location>
</feature>
<feature type="compositionally biased region" description="Acidic residues" evidence="3">
    <location>
        <begin position="59"/>
        <end position="88"/>
    </location>
</feature>
<feature type="compositionally biased region" description="Basic residues" evidence="3">
    <location>
        <begin position="116"/>
        <end position="134"/>
    </location>
</feature>
<evidence type="ECO:0000250" key="1"/>
<evidence type="ECO:0000255" key="2">
    <source>
        <dbReference type="PROSITE-ProRule" id="PRU00034"/>
    </source>
</evidence>
<evidence type="ECO:0000256" key="3">
    <source>
        <dbReference type="SAM" id="MobiDB-lite"/>
    </source>
</evidence>
<keyword id="KW-0539">Nucleus</keyword>
<keyword id="KW-1185">Reference proteome</keyword>
<keyword id="KW-0690">Ribosome biogenesis</keyword>
<keyword id="KW-0694">RNA-binding</keyword>
<keyword id="KW-0698">rRNA processing</keyword>
<keyword id="KW-0699">rRNA-binding</keyword>
<accession>Q9VKB4</accession>
<name>RPF1_DROME</name>
<protein>
    <recommendedName>
        <fullName>Probable ribosome production factor 1</fullName>
    </recommendedName>
    <alternativeName>
        <fullName>Ribosome biogenesis protein RPF1</fullName>
    </alternativeName>
</protein>
<organism>
    <name type="scientific">Drosophila melanogaster</name>
    <name type="common">Fruit fly</name>
    <dbReference type="NCBI Taxonomy" id="7227"/>
    <lineage>
        <taxon>Eukaryota</taxon>
        <taxon>Metazoa</taxon>
        <taxon>Ecdysozoa</taxon>
        <taxon>Arthropoda</taxon>
        <taxon>Hexapoda</taxon>
        <taxon>Insecta</taxon>
        <taxon>Pterygota</taxon>
        <taxon>Neoptera</taxon>
        <taxon>Endopterygota</taxon>
        <taxon>Diptera</taxon>
        <taxon>Brachycera</taxon>
        <taxon>Muscomorpha</taxon>
        <taxon>Ephydroidea</taxon>
        <taxon>Drosophilidae</taxon>
        <taxon>Drosophila</taxon>
        <taxon>Sophophora</taxon>
    </lineage>
</organism>
<gene>
    <name type="ORF">CG6712</name>
</gene>
<proteinExistence type="evidence at transcript level"/>
<comment type="function">
    <text evidence="1">May be required for ribosome biogenesis.</text>
</comment>
<comment type="subcellular location">
    <subcellularLocation>
        <location evidence="1">Nucleus</location>
        <location evidence="1">Nucleolus</location>
    </subcellularLocation>
</comment>
<dbReference type="EMBL" id="AE014134">
    <property type="protein sequence ID" value="AAF53162.1"/>
    <property type="molecule type" value="Genomic_DNA"/>
</dbReference>
<dbReference type="EMBL" id="AY051683">
    <property type="protein sequence ID" value="AAK93107.1"/>
    <property type="molecule type" value="mRNA"/>
</dbReference>
<dbReference type="RefSeq" id="NP_477479.1">
    <property type="nucleotide sequence ID" value="NM_058131.5"/>
</dbReference>
<dbReference type="SMR" id="Q9VKB4"/>
<dbReference type="BioGRID" id="60682">
    <property type="interactions" value="11"/>
</dbReference>
<dbReference type="FunCoup" id="Q9VKB4">
    <property type="interactions" value="1264"/>
</dbReference>
<dbReference type="IntAct" id="Q9VKB4">
    <property type="interactions" value="31"/>
</dbReference>
<dbReference type="STRING" id="7227.FBpp0079946"/>
<dbReference type="PaxDb" id="7227-FBpp0079946"/>
<dbReference type="DNASU" id="34631"/>
<dbReference type="EnsemblMetazoa" id="FBtr0080364">
    <property type="protein sequence ID" value="FBpp0079946"/>
    <property type="gene ID" value="FBgn0032408"/>
</dbReference>
<dbReference type="GeneID" id="34631"/>
<dbReference type="KEGG" id="dme:Dmel_CG6712"/>
<dbReference type="UCSC" id="CG6712-RA">
    <property type="organism name" value="d. melanogaster"/>
</dbReference>
<dbReference type="AGR" id="FB:FBgn0032408"/>
<dbReference type="FlyBase" id="FBgn0032408">
    <property type="gene designation" value="CG6712"/>
</dbReference>
<dbReference type="VEuPathDB" id="VectorBase:FBgn0032408"/>
<dbReference type="eggNOG" id="KOG2780">
    <property type="taxonomic scope" value="Eukaryota"/>
</dbReference>
<dbReference type="GeneTree" id="ENSGT00940000153231"/>
<dbReference type="HOGENOM" id="CLU_040063_1_0_1"/>
<dbReference type="InParanoid" id="Q9VKB4"/>
<dbReference type="OMA" id="AWIISNK"/>
<dbReference type="OrthoDB" id="264354at2759"/>
<dbReference type="PhylomeDB" id="Q9VKB4"/>
<dbReference type="BioGRID-ORCS" id="34631">
    <property type="hits" value="1 hit in 1 CRISPR screen"/>
</dbReference>
<dbReference type="GenomeRNAi" id="34631"/>
<dbReference type="PRO" id="PR:Q9VKB4"/>
<dbReference type="Proteomes" id="UP000000803">
    <property type="component" value="Chromosome 2L"/>
</dbReference>
<dbReference type="Bgee" id="FBgn0032408">
    <property type="expression patterns" value="Expressed in posterior terminal follicle cell in ovary and 95 other cell types or tissues"/>
</dbReference>
<dbReference type="GO" id="GO:0005730">
    <property type="term" value="C:nucleolus"/>
    <property type="evidence" value="ECO:0000250"/>
    <property type="project" value="UniProtKB"/>
</dbReference>
<dbReference type="GO" id="GO:0030687">
    <property type="term" value="C:preribosome, large subunit precursor"/>
    <property type="evidence" value="ECO:0000318"/>
    <property type="project" value="GO_Central"/>
</dbReference>
<dbReference type="GO" id="GO:0003723">
    <property type="term" value="F:RNA binding"/>
    <property type="evidence" value="ECO:0000250"/>
    <property type="project" value="UniProtKB"/>
</dbReference>
<dbReference type="GO" id="GO:0042134">
    <property type="term" value="F:rRNA primary transcript binding"/>
    <property type="evidence" value="ECO:0007669"/>
    <property type="project" value="InterPro"/>
</dbReference>
<dbReference type="GO" id="GO:0000460">
    <property type="term" value="P:maturation of 5.8S rRNA"/>
    <property type="evidence" value="ECO:0000318"/>
    <property type="project" value="GO_Central"/>
</dbReference>
<dbReference type="GO" id="GO:0000470">
    <property type="term" value="P:maturation of LSU-rRNA"/>
    <property type="evidence" value="ECO:0000318"/>
    <property type="project" value="GO_Central"/>
</dbReference>
<dbReference type="GO" id="GO:0042254">
    <property type="term" value="P:ribosome biogenesis"/>
    <property type="evidence" value="ECO:0000250"/>
    <property type="project" value="FlyBase"/>
</dbReference>
<dbReference type="FunFam" id="3.40.50.10480:FF:000002">
    <property type="entry name" value="Ribosome production factor 1"/>
    <property type="match status" value="1"/>
</dbReference>
<dbReference type="Gene3D" id="3.40.50.10480">
    <property type="entry name" value="Probable brix-domain ribosomal biogenesis protein"/>
    <property type="match status" value="1"/>
</dbReference>
<dbReference type="InterPro" id="IPR007109">
    <property type="entry name" value="Brix"/>
</dbReference>
<dbReference type="InterPro" id="IPR044281">
    <property type="entry name" value="IMP4/RPF1"/>
</dbReference>
<dbReference type="PANTHER" id="PTHR22734:SF3">
    <property type="entry name" value="RIBOSOME PRODUCTION FACTOR 1"/>
    <property type="match status" value="1"/>
</dbReference>
<dbReference type="PANTHER" id="PTHR22734">
    <property type="entry name" value="U3 SMALL NUCLEOLAR RIBONUCLEOPROTEIN PROTEIN IMP4"/>
    <property type="match status" value="1"/>
</dbReference>
<dbReference type="Pfam" id="PF04427">
    <property type="entry name" value="Brix"/>
    <property type="match status" value="1"/>
</dbReference>
<dbReference type="SMART" id="SM00879">
    <property type="entry name" value="Brix"/>
    <property type="match status" value="1"/>
</dbReference>
<dbReference type="SUPFAM" id="SSF52954">
    <property type="entry name" value="Class II aaRS ABD-related"/>
    <property type="match status" value="1"/>
</dbReference>
<dbReference type="PROSITE" id="PS50833">
    <property type="entry name" value="BRIX"/>
    <property type="match status" value="1"/>
</dbReference>